<sequence>MQAIYDIPEILFQHGVTDVVLSPGSRCAPLSIAFSRHKKLQIKVVPDERSAAFIALGMSLQTQKPTVLICTSGSALYNYAPAIVEAYYQRVPLIVLSADRPPEWIDQNDGQTIRQQEIYGKHSKAFFQLSAEHELPDTQWETYRKVNEAVSISEAYPKGPVHINIPFREPFYPKGEIMFSGSPTVIKREQPLHTLSDEQWKSIQHKLDSYKKILFVGGQHLYDESLRLKIGNIKAPFIGEVVSNLHGVRNVIHTHDTLLTSIPLTDLEELKPDLVISFGGALLSKWLKQFIRSNESIDHWYVGPDVTTPDVFQHLCQIIPVQLNEFLSKTTIASNTQEQFVQRWIQQQTHIIPAIREFNTKEKVFNEFTAVFDVLNHLPAFAKLHLANSMSVRYANTLGISQRNAEVFANRGTSGIDGVISTAYGYALKTSQLVTIITGDLAFFYDRNAFWNNYKPSNLRVVLLNNHGGGIFRMIDGPSALPELDELFETKQTLSARYLATEHGLEYTLCKNLNGLNQALESFFQPSMFGKILEIETDSVKNTEVFKRFKKTIQQSYLS</sequence>
<proteinExistence type="inferred from homology"/>
<feature type="chain" id="PRO_0000341730" description="2-succinyl-5-enolpyruvyl-6-hydroxy-3-cyclohexene-1-carboxylate synthase">
    <location>
        <begin position="1"/>
        <end position="559"/>
    </location>
</feature>
<gene>
    <name evidence="1" type="primary">menD</name>
    <name type="ordered locus">CHU_1759</name>
</gene>
<keyword id="KW-0460">Magnesium</keyword>
<keyword id="KW-0464">Manganese</keyword>
<keyword id="KW-0474">Menaquinone biosynthesis</keyword>
<keyword id="KW-0479">Metal-binding</keyword>
<keyword id="KW-1185">Reference proteome</keyword>
<keyword id="KW-0786">Thiamine pyrophosphate</keyword>
<keyword id="KW-0808">Transferase</keyword>
<evidence type="ECO:0000255" key="1">
    <source>
        <dbReference type="HAMAP-Rule" id="MF_01659"/>
    </source>
</evidence>
<accession>Q11U88</accession>
<dbReference type="EC" id="2.2.1.9" evidence="1"/>
<dbReference type="EMBL" id="CP000383">
    <property type="protein sequence ID" value="ABG59026.1"/>
    <property type="molecule type" value="Genomic_DNA"/>
</dbReference>
<dbReference type="RefSeq" id="WP_011585143.1">
    <property type="nucleotide sequence ID" value="NC_008255.1"/>
</dbReference>
<dbReference type="SMR" id="Q11U88"/>
<dbReference type="STRING" id="269798.CHU_1759"/>
<dbReference type="DNASU" id="4184849"/>
<dbReference type="KEGG" id="chu:CHU_1759"/>
<dbReference type="eggNOG" id="COG1165">
    <property type="taxonomic scope" value="Bacteria"/>
</dbReference>
<dbReference type="HOGENOM" id="CLU_006051_3_0_10"/>
<dbReference type="OrthoDB" id="9791859at2"/>
<dbReference type="UniPathway" id="UPA00079"/>
<dbReference type="UniPathway" id="UPA01057">
    <property type="reaction ID" value="UER00164"/>
</dbReference>
<dbReference type="Proteomes" id="UP000001822">
    <property type="component" value="Chromosome"/>
</dbReference>
<dbReference type="GO" id="GO:0070204">
    <property type="term" value="F:2-succinyl-5-enolpyruvyl-6-hydroxy-3-cyclohexene-1-carboxylic-acid synthase activity"/>
    <property type="evidence" value="ECO:0007669"/>
    <property type="project" value="UniProtKB-UniRule"/>
</dbReference>
<dbReference type="GO" id="GO:0000287">
    <property type="term" value="F:magnesium ion binding"/>
    <property type="evidence" value="ECO:0007669"/>
    <property type="project" value="UniProtKB-UniRule"/>
</dbReference>
<dbReference type="GO" id="GO:0030145">
    <property type="term" value="F:manganese ion binding"/>
    <property type="evidence" value="ECO:0007669"/>
    <property type="project" value="UniProtKB-UniRule"/>
</dbReference>
<dbReference type="GO" id="GO:0030976">
    <property type="term" value="F:thiamine pyrophosphate binding"/>
    <property type="evidence" value="ECO:0007669"/>
    <property type="project" value="UniProtKB-UniRule"/>
</dbReference>
<dbReference type="GO" id="GO:0009234">
    <property type="term" value="P:menaquinone biosynthetic process"/>
    <property type="evidence" value="ECO:0007669"/>
    <property type="project" value="UniProtKB-UniRule"/>
</dbReference>
<dbReference type="CDD" id="cd07037">
    <property type="entry name" value="TPP_PYR_MenD"/>
    <property type="match status" value="1"/>
</dbReference>
<dbReference type="CDD" id="cd02009">
    <property type="entry name" value="TPP_SHCHC_synthase"/>
    <property type="match status" value="1"/>
</dbReference>
<dbReference type="Gene3D" id="3.40.50.970">
    <property type="match status" value="2"/>
</dbReference>
<dbReference type="Gene3D" id="3.40.50.1220">
    <property type="entry name" value="TPP-binding domain"/>
    <property type="match status" value="1"/>
</dbReference>
<dbReference type="HAMAP" id="MF_01659">
    <property type="entry name" value="MenD"/>
    <property type="match status" value="1"/>
</dbReference>
<dbReference type="InterPro" id="IPR004433">
    <property type="entry name" value="MenaQ_synth_MenD"/>
</dbReference>
<dbReference type="InterPro" id="IPR032264">
    <property type="entry name" value="MenD_middle"/>
</dbReference>
<dbReference type="InterPro" id="IPR029061">
    <property type="entry name" value="THDP-binding"/>
</dbReference>
<dbReference type="InterPro" id="IPR012001">
    <property type="entry name" value="Thiamin_PyroP_enz_TPP-bd_dom"/>
</dbReference>
<dbReference type="NCBIfam" id="TIGR00173">
    <property type="entry name" value="menD"/>
    <property type="match status" value="1"/>
</dbReference>
<dbReference type="PANTHER" id="PTHR42916">
    <property type="entry name" value="2-SUCCINYL-5-ENOLPYRUVYL-6-HYDROXY-3-CYCLOHEXENE-1-CARBOXYLATE SYNTHASE"/>
    <property type="match status" value="1"/>
</dbReference>
<dbReference type="PANTHER" id="PTHR42916:SF1">
    <property type="entry name" value="PROTEIN PHYLLO, CHLOROPLASTIC"/>
    <property type="match status" value="1"/>
</dbReference>
<dbReference type="Pfam" id="PF16582">
    <property type="entry name" value="TPP_enzyme_M_2"/>
    <property type="match status" value="1"/>
</dbReference>
<dbReference type="Pfam" id="PF02776">
    <property type="entry name" value="TPP_enzyme_N"/>
    <property type="match status" value="1"/>
</dbReference>
<dbReference type="PIRSF" id="PIRSF004983">
    <property type="entry name" value="MenD"/>
    <property type="match status" value="1"/>
</dbReference>
<dbReference type="SUPFAM" id="SSF52518">
    <property type="entry name" value="Thiamin diphosphate-binding fold (THDP-binding)"/>
    <property type="match status" value="2"/>
</dbReference>
<reference key="1">
    <citation type="journal article" date="2007" name="Appl. Environ. Microbiol.">
        <title>Genome sequence of the cellulolytic gliding bacterium Cytophaga hutchinsonii.</title>
        <authorList>
            <person name="Xie G."/>
            <person name="Bruce D.C."/>
            <person name="Challacombe J.F."/>
            <person name="Chertkov O."/>
            <person name="Detter J.C."/>
            <person name="Gilna P."/>
            <person name="Han C.S."/>
            <person name="Lucas S."/>
            <person name="Misra M."/>
            <person name="Myers G.L."/>
            <person name="Richardson P."/>
            <person name="Tapia R."/>
            <person name="Thayer N."/>
            <person name="Thompson L.S."/>
            <person name="Brettin T.S."/>
            <person name="Henrissat B."/>
            <person name="Wilson D.B."/>
            <person name="McBride M.J."/>
        </authorList>
    </citation>
    <scope>NUCLEOTIDE SEQUENCE [LARGE SCALE GENOMIC DNA]</scope>
    <source>
        <strain>ATCC 33406 / DSM 1761 / JCM 20678 / CIP 103989 / IAM 12607 / NBRC 15051 / NCIMB 9469 / D465</strain>
    </source>
</reference>
<organism>
    <name type="scientific">Cytophaga hutchinsonii (strain ATCC 33406 / DSM 1761 / CIP 103989 / NBRC 15051 / NCIMB 9469 / D465)</name>
    <dbReference type="NCBI Taxonomy" id="269798"/>
    <lineage>
        <taxon>Bacteria</taxon>
        <taxon>Pseudomonadati</taxon>
        <taxon>Bacteroidota</taxon>
        <taxon>Cytophagia</taxon>
        <taxon>Cytophagales</taxon>
        <taxon>Cytophagaceae</taxon>
        <taxon>Cytophaga</taxon>
    </lineage>
</organism>
<name>MEND_CYTH3</name>
<protein>
    <recommendedName>
        <fullName evidence="1">2-succinyl-5-enolpyruvyl-6-hydroxy-3-cyclohexene-1-carboxylate synthase</fullName>
        <shortName evidence="1">SEPHCHC synthase</shortName>
        <ecNumber evidence="1">2.2.1.9</ecNumber>
    </recommendedName>
    <alternativeName>
        <fullName evidence="1">Menaquinone biosynthesis protein MenD</fullName>
    </alternativeName>
</protein>
<comment type="function">
    <text evidence="1">Catalyzes the thiamine diphosphate-dependent decarboxylation of 2-oxoglutarate and the subsequent addition of the resulting succinic semialdehyde-thiamine pyrophosphate anion to isochorismate to yield 2-succinyl-5-enolpyruvyl-6-hydroxy-3-cyclohexene-1-carboxylate (SEPHCHC).</text>
</comment>
<comment type="catalytic activity">
    <reaction evidence="1">
        <text>isochorismate + 2-oxoglutarate + H(+) = 5-enolpyruvoyl-6-hydroxy-2-succinyl-cyclohex-3-ene-1-carboxylate + CO2</text>
        <dbReference type="Rhea" id="RHEA:25593"/>
        <dbReference type="ChEBI" id="CHEBI:15378"/>
        <dbReference type="ChEBI" id="CHEBI:16526"/>
        <dbReference type="ChEBI" id="CHEBI:16810"/>
        <dbReference type="ChEBI" id="CHEBI:29780"/>
        <dbReference type="ChEBI" id="CHEBI:58818"/>
        <dbReference type="EC" id="2.2.1.9"/>
    </reaction>
</comment>
<comment type="cofactor">
    <cofactor evidence="1">
        <name>Mg(2+)</name>
        <dbReference type="ChEBI" id="CHEBI:18420"/>
    </cofactor>
    <cofactor evidence="1">
        <name>Mn(2+)</name>
        <dbReference type="ChEBI" id="CHEBI:29035"/>
    </cofactor>
</comment>
<comment type="cofactor">
    <cofactor evidence="1">
        <name>thiamine diphosphate</name>
        <dbReference type="ChEBI" id="CHEBI:58937"/>
    </cofactor>
    <text evidence="1">Binds 1 thiamine pyrophosphate per subunit.</text>
</comment>
<comment type="pathway">
    <text evidence="1">Quinol/quinone metabolism; 1,4-dihydroxy-2-naphthoate biosynthesis; 1,4-dihydroxy-2-naphthoate from chorismate: step 2/7.</text>
</comment>
<comment type="pathway">
    <text evidence="1">Quinol/quinone metabolism; menaquinone biosynthesis.</text>
</comment>
<comment type="subunit">
    <text evidence="1">Homodimer.</text>
</comment>
<comment type="similarity">
    <text evidence="1">Belongs to the TPP enzyme family. MenD subfamily.</text>
</comment>